<protein>
    <recommendedName>
        <fullName evidence="1">RNA-free ribonuclease P</fullName>
        <shortName evidence="1">RNA-free RNase P</shortName>
        <ecNumber evidence="1">3.1.26.5</ecNumber>
    </recommendedName>
    <alternativeName>
        <fullName evidence="1">Protein-only RNase P</fullName>
    </alternativeName>
</protein>
<accession>A3DL59</accession>
<comment type="function">
    <text evidence="1">RNA-free RNase P that catalyzes the removal of the 5'-leader sequence from pre-tRNA to produce the mature 5'-terminus.</text>
</comment>
<comment type="catalytic activity">
    <reaction evidence="1">
        <text>Endonucleolytic cleavage of RNA, removing 5'-extranucleotides from tRNA precursor.</text>
        <dbReference type="EC" id="3.1.26.5"/>
    </reaction>
</comment>
<comment type="similarity">
    <text evidence="1">Belongs to the HARP family.</text>
</comment>
<name>RFRNP_STAMF</name>
<sequence>MPLIYVLDTSAVTDPRLREIFGVKTLDGVVREYARLLIRSHIVLGAEFYTTPSTALELRSFLERNNVSREAIDMLMGAITIRSPDLYTTRIPAIIMSDWIHDMLIRITKGLRVAEDSVRRAARRGYDYGVAQDKKGFEESVAETIHELREKYREATRKGVIDTRVDFDLVVLAHEINGELVTNDTGIMKLCMQIGVKYIEPPRFINKLFLLLRERTGRV</sequence>
<gene>
    <name type="ordered locus">Smar_0256</name>
</gene>
<evidence type="ECO:0000255" key="1">
    <source>
        <dbReference type="HAMAP-Rule" id="MF_01078"/>
    </source>
</evidence>
<organism>
    <name type="scientific">Staphylothermus marinus (strain ATCC 43588 / DSM 3639 / JCM 9404 / F1)</name>
    <dbReference type="NCBI Taxonomy" id="399550"/>
    <lineage>
        <taxon>Archaea</taxon>
        <taxon>Thermoproteota</taxon>
        <taxon>Thermoprotei</taxon>
        <taxon>Desulfurococcales</taxon>
        <taxon>Desulfurococcaceae</taxon>
        <taxon>Staphylothermus</taxon>
    </lineage>
</organism>
<reference key="1">
    <citation type="journal article" date="2009" name="BMC Genomics">
        <title>The complete genome sequence of Staphylothermus marinus reveals differences in sulfur metabolism among heterotrophic Crenarchaeota.</title>
        <authorList>
            <person name="Anderson I.J."/>
            <person name="Dharmarajan L."/>
            <person name="Rodriguez J."/>
            <person name="Hooper S."/>
            <person name="Porat I."/>
            <person name="Ulrich L.E."/>
            <person name="Elkins J.G."/>
            <person name="Mavromatis K."/>
            <person name="Sun H."/>
            <person name="Land M."/>
            <person name="Lapidus A."/>
            <person name="Lucas S."/>
            <person name="Barry K."/>
            <person name="Huber H."/>
            <person name="Zhulin I.B."/>
            <person name="Whitman W.B."/>
            <person name="Mukhopadhyay B."/>
            <person name="Woese C."/>
            <person name="Bristow J."/>
            <person name="Kyrpides N."/>
        </authorList>
    </citation>
    <scope>NUCLEOTIDE SEQUENCE [LARGE SCALE GENOMIC DNA]</scope>
    <source>
        <strain>ATCC 43588 / DSM 3639 / JCM 9404 / F1</strain>
    </source>
</reference>
<reference key="2">
    <citation type="journal article" date="2009" name="Stand. Genomic Sci.">
        <title>Complete genome sequence of Staphylothermus marinus Stetter and Fiala 1986 type strain F1.</title>
        <authorList>
            <person name="Anderson I.J."/>
            <person name="Sun H."/>
            <person name="Lapidus A."/>
            <person name="Copeland A."/>
            <person name="Glavina Del Rio T."/>
            <person name="Tice H."/>
            <person name="Dalin E."/>
            <person name="Lucas S."/>
            <person name="Barry K."/>
            <person name="Land M."/>
            <person name="Richardson P."/>
            <person name="Huber H."/>
            <person name="Kyrpides N.C."/>
        </authorList>
    </citation>
    <scope>NUCLEOTIDE SEQUENCE [LARGE SCALE GENOMIC DNA]</scope>
    <source>
        <strain>ATCC 43588 / DSM 3639 / JCM 9404 / F1</strain>
    </source>
</reference>
<keyword id="KW-0255">Endonuclease</keyword>
<keyword id="KW-0378">Hydrolase</keyword>
<keyword id="KW-0540">Nuclease</keyword>
<keyword id="KW-1185">Reference proteome</keyword>
<keyword id="KW-0819">tRNA processing</keyword>
<dbReference type="EC" id="3.1.26.5" evidence="1"/>
<dbReference type="EMBL" id="CP000575">
    <property type="protein sequence ID" value="ABN69369.1"/>
    <property type="molecule type" value="Genomic_DNA"/>
</dbReference>
<dbReference type="RefSeq" id="WP_011838560.1">
    <property type="nucleotide sequence ID" value="NC_009033.1"/>
</dbReference>
<dbReference type="SMR" id="A3DL59"/>
<dbReference type="STRING" id="399550.Smar_0256"/>
<dbReference type="GeneID" id="4906571"/>
<dbReference type="KEGG" id="smr:Smar_0256"/>
<dbReference type="eggNOG" id="arCOG00720">
    <property type="taxonomic scope" value="Archaea"/>
</dbReference>
<dbReference type="HOGENOM" id="CLU_109672_0_0_2"/>
<dbReference type="OrthoDB" id="95197at2157"/>
<dbReference type="Proteomes" id="UP000000254">
    <property type="component" value="Chromosome"/>
</dbReference>
<dbReference type="GO" id="GO:0004526">
    <property type="term" value="F:ribonuclease P activity"/>
    <property type="evidence" value="ECO:0007669"/>
    <property type="project" value="UniProtKB-UniRule"/>
</dbReference>
<dbReference type="GO" id="GO:0001682">
    <property type="term" value="P:tRNA 5'-leader removal"/>
    <property type="evidence" value="ECO:0007669"/>
    <property type="project" value="UniProtKB-UniRule"/>
</dbReference>
<dbReference type="CDD" id="cd18691">
    <property type="entry name" value="PIN_VapC-like"/>
    <property type="match status" value="1"/>
</dbReference>
<dbReference type="HAMAP" id="MF_01078">
    <property type="entry name" value="RNA_free_RNase_P"/>
    <property type="match status" value="1"/>
</dbReference>
<dbReference type="InterPro" id="IPR014856">
    <property type="entry name" value="RNA_free_RNase_P"/>
</dbReference>
<dbReference type="NCBIfam" id="NF003345">
    <property type="entry name" value="PRK04358.1-6"/>
    <property type="match status" value="1"/>
</dbReference>
<dbReference type="NCBIfam" id="TIGR03875">
    <property type="entry name" value="RNA_lig_partner"/>
    <property type="match status" value="1"/>
</dbReference>
<dbReference type="PANTHER" id="PTHR41173:SF1">
    <property type="entry name" value="RNA-FREE RIBONUCLEASE P"/>
    <property type="match status" value="1"/>
</dbReference>
<dbReference type="PANTHER" id="PTHR41173">
    <property type="entry name" value="UPF0278 PROTEIN TK1425"/>
    <property type="match status" value="1"/>
</dbReference>
<dbReference type="Pfam" id="PF08745">
    <property type="entry name" value="PIN_5"/>
    <property type="match status" value="1"/>
</dbReference>
<feature type="chain" id="PRO_0000366697" description="RNA-free ribonuclease P">
    <location>
        <begin position="1"/>
        <end position="219"/>
    </location>
</feature>
<proteinExistence type="inferred from homology"/>